<name>RL30_AERHH</name>
<evidence type="ECO:0000255" key="1">
    <source>
        <dbReference type="HAMAP-Rule" id="MF_01371"/>
    </source>
</evidence>
<evidence type="ECO:0000305" key="2"/>
<proteinExistence type="inferred from homology"/>
<organism>
    <name type="scientific">Aeromonas hydrophila subsp. hydrophila (strain ATCC 7966 / DSM 30187 / BCRC 13018 / CCUG 14551 / JCM 1027 / KCTC 2358 / NCIMB 9240 / NCTC 8049)</name>
    <dbReference type="NCBI Taxonomy" id="380703"/>
    <lineage>
        <taxon>Bacteria</taxon>
        <taxon>Pseudomonadati</taxon>
        <taxon>Pseudomonadota</taxon>
        <taxon>Gammaproteobacteria</taxon>
        <taxon>Aeromonadales</taxon>
        <taxon>Aeromonadaceae</taxon>
        <taxon>Aeromonas</taxon>
    </lineage>
</organism>
<feature type="chain" id="PRO_0000347070" description="Large ribosomal subunit protein uL30">
    <location>
        <begin position="1"/>
        <end position="59"/>
    </location>
</feature>
<accession>A0KF39</accession>
<reference key="1">
    <citation type="journal article" date="2006" name="J. Bacteriol.">
        <title>Genome sequence of Aeromonas hydrophila ATCC 7966T: jack of all trades.</title>
        <authorList>
            <person name="Seshadri R."/>
            <person name="Joseph S.W."/>
            <person name="Chopra A.K."/>
            <person name="Sha J."/>
            <person name="Shaw J."/>
            <person name="Graf J."/>
            <person name="Haft D.H."/>
            <person name="Wu M."/>
            <person name="Ren Q."/>
            <person name="Rosovitz M.J."/>
            <person name="Madupu R."/>
            <person name="Tallon L."/>
            <person name="Kim M."/>
            <person name="Jin S."/>
            <person name="Vuong H."/>
            <person name="Stine O.C."/>
            <person name="Ali A."/>
            <person name="Horneman A.J."/>
            <person name="Heidelberg J.F."/>
        </authorList>
    </citation>
    <scope>NUCLEOTIDE SEQUENCE [LARGE SCALE GENOMIC DNA]</scope>
    <source>
        <strain>ATCC 7966 / DSM 30187 / BCRC 13018 / CCUG 14551 / JCM 1027 / KCTC 2358 / NCIMB 9240 / NCTC 8049</strain>
    </source>
</reference>
<sequence>MANTVKVTQTRSSIGRLPKHKATLRGLGLRRIGHTVELEDTPCVRGMINQVYYMVKVEG</sequence>
<protein>
    <recommendedName>
        <fullName evidence="1">Large ribosomal subunit protein uL30</fullName>
    </recommendedName>
    <alternativeName>
        <fullName evidence="2">50S ribosomal protein L30</fullName>
    </alternativeName>
</protein>
<dbReference type="EMBL" id="CP000462">
    <property type="protein sequence ID" value="ABK39681.1"/>
    <property type="molecule type" value="Genomic_DNA"/>
</dbReference>
<dbReference type="RefSeq" id="WP_005307985.1">
    <property type="nucleotide sequence ID" value="NC_008570.1"/>
</dbReference>
<dbReference type="RefSeq" id="YP_854861.1">
    <property type="nucleotide sequence ID" value="NC_008570.1"/>
</dbReference>
<dbReference type="SMR" id="A0KF39"/>
<dbReference type="STRING" id="380703.AHA_0327"/>
<dbReference type="EnsemblBacteria" id="ABK39681">
    <property type="protein sequence ID" value="ABK39681"/>
    <property type="gene ID" value="AHA_0327"/>
</dbReference>
<dbReference type="GeneID" id="97859418"/>
<dbReference type="KEGG" id="aha:AHA_0327"/>
<dbReference type="PATRIC" id="fig|380703.7.peg.316"/>
<dbReference type="eggNOG" id="COG1841">
    <property type="taxonomic scope" value="Bacteria"/>
</dbReference>
<dbReference type="HOGENOM" id="CLU_131047_1_4_6"/>
<dbReference type="OrthoDB" id="9812790at2"/>
<dbReference type="PRO" id="PR:A0KF39"/>
<dbReference type="Proteomes" id="UP000000756">
    <property type="component" value="Chromosome"/>
</dbReference>
<dbReference type="GO" id="GO:0022625">
    <property type="term" value="C:cytosolic large ribosomal subunit"/>
    <property type="evidence" value="ECO:0007669"/>
    <property type="project" value="TreeGrafter"/>
</dbReference>
<dbReference type="GO" id="GO:0003735">
    <property type="term" value="F:structural constituent of ribosome"/>
    <property type="evidence" value="ECO:0007669"/>
    <property type="project" value="InterPro"/>
</dbReference>
<dbReference type="GO" id="GO:0006412">
    <property type="term" value="P:translation"/>
    <property type="evidence" value="ECO:0007669"/>
    <property type="project" value="UniProtKB-UniRule"/>
</dbReference>
<dbReference type="CDD" id="cd01658">
    <property type="entry name" value="Ribosomal_L30"/>
    <property type="match status" value="1"/>
</dbReference>
<dbReference type="FunFam" id="3.30.1390.20:FF:000001">
    <property type="entry name" value="50S ribosomal protein L30"/>
    <property type="match status" value="1"/>
</dbReference>
<dbReference type="Gene3D" id="3.30.1390.20">
    <property type="entry name" value="Ribosomal protein L30, ferredoxin-like fold domain"/>
    <property type="match status" value="1"/>
</dbReference>
<dbReference type="HAMAP" id="MF_01371_B">
    <property type="entry name" value="Ribosomal_uL30_B"/>
    <property type="match status" value="1"/>
</dbReference>
<dbReference type="InterPro" id="IPR036919">
    <property type="entry name" value="Ribo_uL30_ferredoxin-like_sf"/>
</dbReference>
<dbReference type="InterPro" id="IPR005996">
    <property type="entry name" value="Ribosomal_uL30_bac-type"/>
</dbReference>
<dbReference type="InterPro" id="IPR018038">
    <property type="entry name" value="Ribosomal_uL30_CS"/>
</dbReference>
<dbReference type="InterPro" id="IPR016082">
    <property type="entry name" value="Ribosomal_uL30_ferredoxin-like"/>
</dbReference>
<dbReference type="NCBIfam" id="TIGR01308">
    <property type="entry name" value="rpmD_bact"/>
    <property type="match status" value="1"/>
</dbReference>
<dbReference type="PANTHER" id="PTHR15892:SF2">
    <property type="entry name" value="LARGE RIBOSOMAL SUBUNIT PROTEIN UL30M"/>
    <property type="match status" value="1"/>
</dbReference>
<dbReference type="PANTHER" id="PTHR15892">
    <property type="entry name" value="MITOCHONDRIAL RIBOSOMAL PROTEIN L30"/>
    <property type="match status" value="1"/>
</dbReference>
<dbReference type="Pfam" id="PF00327">
    <property type="entry name" value="Ribosomal_L30"/>
    <property type="match status" value="1"/>
</dbReference>
<dbReference type="PIRSF" id="PIRSF002211">
    <property type="entry name" value="Ribosomal_L30_bac-type"/>
    <property type="match status" value="1"/>
</dbReference>
<dbReference type="SUPFAM" id="SSF55129">
    <property type="entry name" value="Ribosomal protein L30p/L7e"/>
    <property type="match status" value="1"/>
</dbReference>
<dbReference type="PROSITE" id="PS00634">
    <property type="entry name" value="RIBOSOMAL_L30"/>
    <property type="match status" value="1"/>
</dbReference>
<gene>
    <name evidence="1" type="primary">rpmD</name>
    <name type="ordered locus">AHA_0327</name>
</gene>
<comment type="subunit">
    <text evidence="1">Part of the 50S ribosomal subunit.</text>
</comment>
<comment type="similarity">
    <text evidence="1">Belongs to the universal ribosomal protein uL30 family.</text>
</comment>
<keyword id="KW-1185">Reference proteome</keyword>
<keyword id="KW-0687">Ribonucleoprotein</keyword>
<keyword id="KW-0689">Ribosomal protein</keyword>